<keyword id="KW-0414">Isoprene biosynthesis</keyword>
<keyword id="KW-0548">Nucleotidyltransferase</keyword>
<keyword id="KW-0808">Transferase</keyword>
<feature type="chain" id="PRO_0000075554" description="2-C-methyl-D-erythritol 4-phosphate cytidylyltransferase">
    <location>
        <begin position="1"/>
        <end position="227"/>
    </location>
</feature>
<feature type="site" description="Transition state stabilizer" evidence="1">
    <location>
        <position position="17"/>
    </location>
</feature>
<feature type="site" description="Transition state stabilizer" evidence="1">
    <location>
        <position position="28"/>
    </location>
</feature>
<feature type="site" description="Positions MEP for the nucleophilic attack" evidence="1">
    <location>
        <position position="157"/>
    </location>
</feature>
<feature type="site" description="Positions MEP for the nucleophilic attack" evidence="1">
    <location>
        <position position="213"/>
    </location>
</feature>
<reference key="1">
    <citation type="journal article" date="2003" name="Nat. Genet.">
        <title>Comparative analysis of the genome sequences of Bordetella pertussis, Bordetella parapertussis and Bordetella bronchiseptica.</title>
        <authorList>
            <person name="Parkhill J."/>
            <person name="Sebaihia M."/>
            <person name="Preston A."/>
            <person name="Murphy L.D."/>
            <person name="Thomson N.R."/>
            <person name="Harris D.E."/>
            <person name="Holden M.T.G."/>
            <person name="Churcher C.M."/>
            <person name="Bentley S.D."/>
            <person name="Mungall K.L."/>
            <person name="Cerdeno-Tarraga A.-M."/>
            <person name="Temple L."/>
            <person name="James K.D."/>
            <person name="Harris B."/>
            <person name="Quail M.A."/>
            <person name="Achtman M."/>
            <person name="Atkin R."/>
            <person name="Baker S."/>
            <person name="Basham D."/>
            <person name="Bason N."/>
            <person name="Cherevach I."/>
            <person name="Chillingworth T."/>
            <person name="Collins M."/>
            <person name="Cronin A."/>
            <person name="Davis P."/>
            <person name="Doggett J."/>
            <person name="Feltwell T."/>
            <person name="Goble A."/>
            <person name="Hamlin N."/>
            <person name="Hauser H."/>
            <person name="Holroyd S."/>
            <person name="Jagels K."/>
            <person name="Leather S."/>
            <person name="Moule S."/>
            <person name="Norberczak H."/>
            <person name="O'Neil S."/>
            <person name="Ormond D."/>
            <person name="Price C."/>
            <person name="Rabbinowitsch E."/>
            <person name="Rutter S."/>
            <person name="Sanders M."/>
            <person name="Saunders D."/>
            <person name="Seeger K."/>
            <person name="Sharp S."/>
            <person name="Simmonds M."/>
            <person name="Skelton J."/>
            <person name="Squares R."/>
            <person name="Squares S."/>
            <person name="Stevens K."/>
            <person name="Unwin L."/>
            <person name="Whitehead S."/>
            <person name="Barrell B.G."/>
            <person name="Maskell D.J."/>
        </authorList>
    </citation>
    <scope>NUCLEOTIDE SEQUENCE [LARGE SCALE GENOMIC DNA]</scope>
    <source>
        <strain>ATCC BAA-588 / NCTC 13252 / RB50</strain>
    </source>
</reference>
<gene>
    <name evidence="1" type="primary">ispD</name>
    <name type="ordered locus">BB3817</name>
</gene>
<protein>
    <recommendedName>
        <fullName evidence="1">2-C-methyl-D-erythritol 4-phosphate cytidylyltransferase</fullName>
        <ecNumber evidence="1">2.7.7.60</ecNumber>
    </recommendedName>
    <alternativeName>
        <fullName evidence="1">4-diphosphocytidyl-2C-methyl-D-erythritol synthase</fullName>
    </alternativeName>
    <alternativeName>
        <fullName evidence="1">MEP cytidylyltransferase</fullName>
        <shortName evidence="1">MCT</shortName>
    </alternativeName>
</protein>
<organism>
    <name type="scientific">Bordetella bronchiseptica (strain ATCC BAA-588 / NCTC 13252 / RB50)</name>
    <name type="common">Alcaligenes bronchisepticus</name>
    <dbReference type="NCBI Taxonomy" id="257310"/>
    <lineage>
        <taxon>Bacteria</taxon>
        <taxon>Pseudomonadati</taxon>
        <taxon>Pseudomonadota</taxon>
        <taxon>Betaproteobacteria</taxon>
        <taxon>Burkholderiales</taxon>
        <taxon>Alcaligenaceae</taxon>
        <taxon>Bordetella</taxon>
    </lineage>
</organism>
<comment type="function">
    <text evidence="1">Catalyzes the formation of 4-diphosphocytidyl-2-C-methyl-D-erythritol from CTP and 2-C-methyl-D-erythritol 4-phosphate (MEP).</text>
</comment>
<comment type="catalytic activity">
    <reaction evidence="1">
        <text>2-C-methyl-D-erythritol 4-phosphate + CTP + H(+) = 4-CDP-2-C-methyl-D-erythritol + diphosphate</text>
        <dbReference type="Rhea" id="RHEA:13429"/>
        <dbReference type="ChEBI" id="CHEBI:15378"/>
        <dbReference type="ChEBI" id="CHEBI:33019"/>
        <dbReference type="ChEBI" id="CHEBI:37563"/>
        <dbReference type="ChEBI" id="CHEBI:57823"/>
        <dbReference type="ChEBI" id="CHEBI:58262"/>
        <dbReference type="EC" id="2.7.7.60"/>
    </reaction>
</comment>
<comment type="pathway">
    <text evidence="1">Isoprenoid biosynthesis; isopentenyl diphosphate biosynthesis via DXP pathway; isopentenyl diphosphate from 1-deoxy-D-xylulose 5-phosphate: step 2/6.</text>
</comment>
<comment type="similarity">
    <text evidence="1">Belongs to the IspD/TarI cytidylyltransferase family. IspD subfamily.</text>
</comment>
<dbReference type="EC" id="2.7.7.60" evidence="1"/>
<dbReference type="EMBL" id="BX640448">
    <property type="protein sequence ID" value="CAE35791.1"/>
    <property type="molecule type" value="Genomic_DNA"/>
</dbReference>
<dbReference type="RefSeq" id="WP_003813895.1">
    <property type="nucleotide sequence ID" value="NC_002927.3"/>
</dbReference>
<dbReference type="SMR" id="Q7WCW3"/>
<dbReference type="GeneID" id="69600744"/>
<dbReference type="KEGG" id="bbr:BB3817"/>
<dbReference type="eggNOG" id="COG1211">
    <property type="taxonomic scope" value="Bacteria"/>
</dbReference>
<dbReference type="HOGENOM" id="CLU_061281_3_0_4"/>
<dbReference type="UniPathway" id="UPA00056">
    <property type="reaction ID" value="UER00093"/>
</dbReference>
<dbReference type="Proteomes" id="UP000001027">
    <property type="component" value="Chromosome"/>
</dbReference>
<dbReference type="GO" id="GO:0050518">
    <property type="term" value="F:2-C-methyl-D-erythritol 4-phosphate cytidylyltransferase activity"/>
    <property type="evidence" value="ECO:0007669"/>
    <property type="project" value="UniProtKB-UniRule"/>
</dbReference>
<dbReference type="GO" id="GO:0019288">
    <property type="term" value="P:isopentenyl diphosphate biosynthetic process, methylerythritol 4-phosphate pathway"/>
    <property type="evidence" value="ECO:0007669"/>
    <property type="project" value="UniProtKB-UniRule"/>
</dbReference>
<dbReference type="CDD" id="cd02516">
    <property type="entry name" value="CDP-ME_synthetase"/>
    <property type="match status" value="1"/>
</dbReference>
<dbReference type="FunFam" id="3.90.550.10:FF:000003">
    <property type="entry name" value="2-C-methyl-D-erythritol 4-phosphate cytidylyltransferase"/>
    <property type="match status" value="1"/>
</dbReference>
<dbReference type="Gene3D" id="3.90.550.10">
    <property type="entry name" value="Spore Coat Polysaccharide Biosynthesis Protein SpsA, Chain A"/>
    <property type="match status" value="1"/>
</dbReference>
<dbReference type="HAMAP" id="MF_00108">
    <property type="entry name" value="IspD"/>
    <property type="match status" value="1"/>
</dbReference>
<dbReference type="InterPro" id="IPR001228">
    <property type="entry name" value="IspD"/>
</dbReference>
<dbReference type="InterPro" id="IPR034683">
    <property type="entry name" value="IspD/TarI"/>
</dbReference>
<dbReference type="InterPro" id="IPR050088">
    <property type="entry name" value="IspD/TarI_cytidylyltransf_bact"/>
</dbReference>
<dbReference type="InterPro" id="IPR018294">
    <property type="entry name" value="ISPD_synthase_CS"/>
</dbReference>
<dbReference type="InterPro" id="IPR029044">
    <property type="entry name" value="Nucleotide-diphossugar_trans"/>
</dbReference>
<dbReference type="NCBIfam" id="TIGR00453">
    <property type="entry name" value="ispD"/>
    <property type="match status" value="1"/>
</dbReference>
<dbReference type="PANTHER" id="PTHR32125">
    <property type="entry name" value="2-C-METHYL-D-ERYTHRITOL 4-PHOSPHATE CYTIDYLYLTRANSFERASE, CHLOROPLASTIC"/>
    <property type="match status" value="1"/>
</dbReference>
<dbReference type="PANTHER" id="PTHR32125:SF4">
    <property type="entry name" value="2-C-METHYL-D-ERYTHRITOL 4-PHOSPHATE CYTIDYLYLTRANSFERASE, CHLOROPLASTIC"/>
    <property type="match status" value="1"/>
</dbReference>
<dbReference type="Pfam" id="PF01128">
    <property type="entry name" value="IspD"/>
    <property type="match status" value="1"/>
</dbReference>
<dbReference type="SUPFAM" id="SSF53448">
    <property type="entry name" value="Nucleotide-diphospho-sugar transferases"/>
    <property type="match status" value="1"/>
</dbReference>
<dbReference type="PROSITE" id="PS01295">
    <property type="entry name" value="ISPD"/>
    <property type="match status" value="1"/>
</dbReference>
<accession>Q7WCW3</accession>
<name>ISPD_BORBR</name>
<proteinExistence type="inferred from homology"/>
<evidence type="ECO:0000255" key="1">
    <source>
        <dbReference type="HAMAP-Rule" id="MF_00108"/>
    </source>
</evidence>
<sequence>MSESLIAIVPAAGIGARASLPGEAAVPKQYRPLAGQPMLRHAVRALLADPRIVQVRVAVSAGDGWVEQALAGLPRTVWRPCGGPNRADTVAAALADSGAAADDWILVHDAARPGLPAAALARLIDACLDDAVGGLLALPVADTVKAGRQRVSRTVDRDGLWLAQTPQMFRAGLLRDALARARAAGLAVTDEASAVEAAGHAPRLVAGALRNFKVTWPDDFELMEKWL</sequence>